<comment type="catalytic activity">
    <reaction evidence="1">
        <text>tRNA(Asn) + L-asparagine + ATP = L-asparaginyl-tRNA(Asn) + AMP + diphosphate + H(+)</text>
        <dbReference type="Rhea" id="RHEA:11180"/>
        <dbReference type="Rhea" id="RHEA-COMP:9659"/>
        <dbReference type="Rhea" id="RHEA-COMP:9674"/>
        <dbReference type="ChEBI" id="CHEBI:15378"/>
        <dbReference type="ChEBI" id="CHEBI:30616"/>
        <dbReference type="ChEBI" id="CHEBI:33019"/>
        <dbReference type="ChEBI" id="CHEBI:58048"/>
        <dbReference type="ChEBI" id="CHEBI:78442"/>
        <dbReference type="ChEBI" id="CHEBI:78515"/>
        <dbReference type="ChEBI" id="CHEBI:456215"/>
        <dbReference type="EC" id="6.1.1.22"/>
    </reaction>
</comment>
<comment type="subunit">
    <text evidence="1">Homodimer.</text>
</comment>
<comment type="subcellular location">
    <subcellularLocation>
        <location evidence="1">Cytoplasm</location>
    </subcellularLocation>
</comment>
<comment type="similarity">
    <text evidence="1">Belongs to the class-II aminoacyl-tRNA synthetase family.</text>
</comment>
<keyword id="KW-0030">Aminoacyl-tRNA synthetase</keyword>
<keyword id="KW-0067">ATP-binding</keyword>
<keyword id="KW-0963">Cytoplasm</keyword>
<keyword id="KW-0436">Ligase</keyword>
<keyword id="KW-0547">Nucleotide-binding</keyword>
<keyword id="KW-0648">Protein biosynthesis</keyword>
<keyword id="KW-1185">Reference proteome</keyword>
<dbReference type="EC" id="6.1.1.22" evidence="1"/>
<dbReference type="EMBL" id="AE016830">
    <property type="protein sequence ID" value="AAO82093.1"/>
    <property type="molecule type" value="Genomic_DNA"/>
</dbReference>
<dbReference type="RefSeq" id="NP_816023.1">
    <property type="nucleotide sequence ID" value="NC_004668.1"/>
</dbReference>
<dbReference type="RefSeq" id="WP_002376912.1">
    <property type="nucleotide sequence ID" value="NZ_KE136528.1"/>
</dbReference>
<dbReference type="SMR" id="Q831X4"/>
<dbReference type="STRING" id="226185.EF_2371"/>
<dbReference type="EnsemblBacteria" id="AAO82093">
    <property type="protein sequence ID" value="AAO82093"/>
    <property type="gene ID" value="EF_2371"/>
</dbReference>
<dbReference type="GeneID" id="60894429"/>
<dbReference type="KEGG" id="efa:EF2371"/>
<dbReference type="PATRIC" id="fig|226185.9.peg.2219"/>
<dbReference type="eggNOG" id="COG0017">
    <property type="taxonomic scope" value="Bacteria"/>
</dbReference>
<dbReference type="HOGENOM" id="CLU_004553_2_0_9"/>
<dbReference type="Proteomes" id="UP000001415">
    <property type="component" value="Chromosome"/>
</dbReference>
<dbReference type="GO" id="GO:0005737">
    <property type="term" value="C:cytoplasm"/>
    <property type="evidence" value="ECO:0007669"/>
    <property type="project" value="UniProtKB-SubCell"/>
</dbReference>
<dbReference type="GO" id="GO:0004816">
    <property type="term" value="F:asparagine-tRNA ligase activity"/>
    <property type="evidence" value="ECO:0007669"/>
    <property type="project" value="UniProtKB-UniRule"/>
</dbReference>
<dbReference type="GO" id="GO:0005524">
    <property type="term" value="F:ATP binding"/>
    <property type="evidence" value="ECO:0007669"/>
    <property type="project" value="UniProtKB-UniRule"/>
</dbReference>
<dbReference type="GO" id="GO:0140096">
    <property type="term" value="F:catalytic activity, acting on a protein"/>
    <property type="evidence" value="ECO:0007669"/>
    <property type="project" value="UniProtKB-ARBA"/>
</dbReference>
<dbReference type="GO" id="GO:0003676">
    <property type="term" value="F:nucleic acid binding"/>
    <property type="evidence" value="ECO:0007669"/>
    <property type="project" value="InterPro"/>
</dbReference>
<dbReference type="GO" id="GO:0016740">
    <property type="term" value="F:transferase activity"/>
    <property type="evidence" value="ECO:0007669"/>
    <property type="project" value="UniProtKB-ARBA"/>
</dbReference>
<dbReference type="GO" id="GO:0006421">
    <property type="term" value="P:asparaginyl-tRNA aminoacylation"/>
    <property type="evidence" value="ECO:0007669"/>
    <property type="project" value="UniProtKB-UniRule"/>
</dbReference>
<dbReference type="CDD" id="cd04323">
    <property type="entry name" value="AsnRS_cyto_like_N"/>
    <property type="match status" value="1"/>
</dbReference>
<dbReference type="CDD" id="cd00776">
    <property type="entry name" value="AsxRS_core"/>
    <property type="match status" value="1"/>
</dbReference>
<dbReference type="Gene3D" id="3.30.930.10">
    <property type="entry name" value="Bira Bifunctional Protein, Domain 2"/>
    <property type="match status" value="1"/>
</dbReference>
<dbReference type="Gene3D" id="2.40.50.140">
    <property type="entry name" value="Nucleic acid-binding proteins"/>
    <property type="match status" value="1"/>
</dbReference>
<dbReference type="HAMAP" id="MF_00534">
    <property type="entry name" value="Asn_tRNA_synth"/>
    <property type="match status" value="1"/>
</dbReference>
<dbReference type="InterPro" id="IPR004364">
    <property type="entry name" value="Aa-tRNA-synt_II"/>
</dbReference>
<dbReference type="InterPro" id="IPR006195">
    <property type="entry name" value="aa-tRNA-synth_II"/>
</dbReference>
<dbReference type="InterPro" id="IPR045864">
    <property type="entry name" value="aa-tRNA-synth_II/BPL/LPL"/>
</dbReference>
<dbReference type="InterPro" id="IPR004522">
    <property type="entry name" value="Asn-tRNA-ligase"/>
</dbReference>
<dbReference type="InterPro" id="IPR002312">
    <property type="entry name" value="Asp/Asn-tRNA-synth_IIb"/>
</dbReference>
<dbReference type="InterPro" id="IPR012340">
    <property type="entry name" value="NA-bd_OB-fold"/>
</dbReference>
<dbReference type="InterPro" id="IPR004365">
    <property type="entry name" value="NA-bd_OB_tRNA"/>
</dbReference>
<dbReference type="NCBIfam" id="TIGR00457">
    <property type="entry name" value="asnS"/>
    <property type="match status" value="1"/>
</dbReference>
<dbReference type="NCBIfam" id="NF003037">
    <property type="entry name" value="PRK03932.1"/>
    <property type="match status" value="1"/>
</dbReference>
<dbReference type="PANTHER" id="PTHR22594:SF34">
    <property type="entry name" value="ASPARAGINE--TRNA LIGASE, MITOCHONDRIAL-RELATED"/>
    <property type="match status" value="1"/>
</dbReference>
<dbReference type="PANTHER" id="PTHR22594">
    <property type="entry name" value="ASPARTYL/LYSYL-TRNA SYNTHETASE"/>
    <property type="match status" value="1"/>
</dbReference>
<dbReference type="Pfam" id="PF00152">
    <property type="entry name" value="tRNA-synt_2"/>
    <property type="match status" value="1"/>
</dbReference>
<dbReference type="Pfam" id="PF01336">
    <property type="entry name" value="tRNA_anti-codon"/>
    <property type="match status" value="1"/>
</dbReference>
<dbReference type="PRINTS" id="PR01042">
    <property type="entry name" value="TRNASYNTHASP"/>
</dbReference>
<dbReference type="SUPFAM" id="SSF55681">
    <property type="entry name" value="Class II aaRS and biotin synthetases"/>
    <property type="match status" value="1"/>
</dbReference>
<dbReference type="SUPFAM" id="SSF50249">
    <property type="entry name" value="Nucleic acid-binding proteins"/>
    <property type="match status" value="1"/>
</dbReference>
<dbReference type="PROSITE" id="PS50862">
    <property type="entry name" value="AA_TRNA_LIGASE_II"/>
    <property type="match status" value="1"/>
</dbReference>
<sequence length="450" mass="51492">MNGETNVEQIQIIDSNKHVGETVKIGAWIANKRSSGKIAFLQLRDGTAFFQGVVFKPNFIEAFGEEAGTEKFQEIKHLSQETAVMVTGVIKEDSRSKFGYEMDITDLEVVGASEDYPITPKEHGTDFLMDHRHLWLRSSKQHAIMLVRNEIIRATYEFFNEQGFIKIDSPILTGSAPEGTTELFETDYFGQPAFLSQTGQLYAEAGAMAFGKVFTFGPTFRAEKSKTRRHLTEFWMIEPEMAYTTHEESLDIQEAYVKHLIKSVLKNQQYPLDVLERDTALLEKYVSEPFKRITYDDAIELLQKEEANNDYDHIEWGEDFGSPHETFISNYYGVPTFILNYPKAIKAFYMKPHPTREDVVICADLIAPEGYGEIIGGSERATDYDYLKEKVAEFGLSEEEYSWYLDLRKYGSVPHSGFGLGLERAVTFITGNEHIREAIPFPRMLNRIYP</sequence>
<reference key="1">
    <citation type="journal article" date="2003" name="Science">
        <title>Role of mobile DNA in the evolution of vancomycin-resistant Enterococcus faecalis.</title>
        <authorList>
            <person name="Paulsen I.T."/>
            <person name="Banerjei L."/>
            <person name="Myers G.S.A."/>
            <person name="Nelson K.E."/>
            <person name="Seshadri R."/>
            <person name="Read T.D."/>
            <person name="Fouts D.E."/>
            <person name="Eisen J.A."/>
            <person name="Gill S.R."/>
            <person name="Heidelberg J.F."/>
            <person name="Tettelin H."/>
            <person name="Dodson R.J."/>
            <person name="Umayam L.A."/>
            <person name="Brinkac L.M."/>
            <person name="Beanan M.J."/>
            <person name="Daugherty S.C."/>
            <person name="DeBoy R.T."/>
            <person name="Durkin S.A."/>
            <person name="Kolonay J.F."/>
            <person name="Madupu R."/>
            <person name="Nelson W.C."/>
            <person name="Vamathevan J.J."/>
            <person name="Tran B."/>
            <person name="Upton J."/>
            <person name="Hansen T."/>
            <person name="Shetty J."/>
            <person name="Khouri H.M."/>
            <person name="Utterback T.R."/>
            <person name="Radune D."/>
            <person name="Ketchum K.A."/>
            <person name="Dougherty B.A."/>
            <person name="Fraser C.M."/>
        </authorList>
    </citation>
    <scope>NUCLEOTIDE SEQUENCE [LARGE SCALE GENOMIC DNA]</scope>
    <source>
        <strain>ATCC 700802 / V583</strain>
    </source>
</reference>
<accession>Q831X4</accession>
<gene>
    <name evidence="1" type="primary">asnS</name>
    <name type="ordered locus">EF_2371</name>
</gene>
<proteinExistence type="inferred from homology"/>
<feature type="chain" id="PRO_0000176409" description="Asparagine--tRNA ligase">
    <location>
        <begin position="1"/>
        <end position="450"/>
    </location>
</feature>
<evidence type="ECO:0000255" key="1">
    <source>
        <dbReference type="HAMAP-Rule" id="MF_00534"/>
    </source>
</evidence>
<name>SYN_ENTFA</name>
<organism>
    <name type="scientific">Enterococcus faecalis (strain ATCC 700802 / V583)</name>
    <dbReference type="NCBI Taxonomy" id="226185"/>
    <lineage>
        <taxon>Bacteria</taxon>
        <taxon>Bacillati</taxon>
        <taxon>Bacillota</taxon>
        <taxon>Bacilli</taxon>
        <taxon>Lactobacillales</taxon>
        <taxon>Enterococcaceae</taxon>
        <taxon>Enterococcus</taxon>
    </lineage>
</organism>
<protein>
    <recommendedName>
        <fullName evidence="1">Asparagine--tRNA ligase</fullName>
        <ecNumber evidence="1">6.1.1.22</ecNumber>
    </recommendedName>
    <alternativeName>
        <fullName evidence="1">Asparaginyl-tRNA synthetase</fullName>
        <shortName evidence="1">AsnRS</shortName>
    </alternativeName>
</protein>